<dbReference type="EMBL" id="CP000970">
    <property type="protein sequence ID" value="ACB18502.1"/>
    <property type="molecule type" value="Genomic_DNA"/>
</dbReference>
<dbReference type="RefSeq" id="WP_000858214.1">
    <property type="nucleotide sequence ID" value="NC_010498.1"/>
</dbReference>
<dbReference type="SMR" id="B1LJ76"/>
<dbReference type="GeneID" id="93778248"/>
<dbReference type="KEGG" id="ecm:EcSMS35_3836"/>
<dbReference type="HOGENOM" id="CLU_019375_7_0_6"/>
<dbReference type="Proteomes" id="UP000007011">
    <property type="component" value="Chromosome"/>
</dbReference>
<dbReference type="GO" id="GO:0005886">
    <property type="term" value="C:plasma membrane"/>
    <property type="evidence" value="ECO:0007669"/>
    <property type="project" value="UniProtKB-SubCell"/>
</dbReference>
<dbReference type="GO" id="GO:0015138">
    <property type="term" value="F:fumarate transmembrane transporter activity"/>
    <property type="evidence" value="ECO:0007669"/>
    <property type="project" value="TreeGrafter"/>
</dbReference>
<dbReference type="GO" id="GO:0015366">
    <property type="term" value="F:malate:proton symporter activity"/>
    <property type="evidence" value="ECO:0007669"/>
    <property type="project" value="TreeGrafter"/>
</dbReference>
<dbReference type="GO" id="GO:0015141">
    <property type="term" value="F:succinate transmembrane transporter activity"/>
    <property type="evidence" value="ECO:0007669"/>
    <property type="project" value="TreeGrafter"/>
</dbReference>
<dbReference type="GO" id="GO:0070778">
    <property type="term" value="P:L-aspartate transmembrane transport"/>
    <property type="evidence" value="ECO:0007669"/>
    <property type="project" value="TreeGrafter"/>
</dbReference>
<dbReference type="FunFam" id="1.10.3860.10:FF:000001">
    <property type="entry name" value="C4-dicarboxylate transport protein"/>
    <property type="match status" value="1"/>
</dbReference>
<dbReference type="Gene3D" id="1.10.3860.10">
    <property type="entry name" value="Sodium:dicarboxylate symporter"/>
    <property type="match status" value="1"/>
</dbReference>
<dbReference type="HAMAP" id="MF_01300">
    <property type="entry name" value="C4_dicarb_transport"/>
    <property type="match status" value="1"/>
</dbReference>
<dbReference type="InterPro" id="IPR023954">
    <property type="entry name" value="C4_dicarb_transport"/>
</dbReference>
<dbReference type="InterPro" id="IPR001991">
    <property type="entry name" value="Na-dicarboxylate_symporter"/>
</dbReference>
<dbReference type="InterPro" id="IPR018107">
    <property type="entry name" value="Na-dicarboxylate_symporter_CS"/>
</dbReference>
<dbReference type="InterPro" id="IPR036458">
    <property type="entry name" value="Na:dicarbo_symporter_sf"/>
</dbReference>
<dbReference type="NCBIfam" id="NF002461">
    <property type="entry name" value="PRK01663.1"/>
    <property type="match status" value="1"/>
</dbReference>
<dbReference type="NCBIfam" id="NF009587">
    <property type="entry name" value="PRK13027.1"/>
    <property type="match status" value="1"/>
</dbReference>
<dbReference type="PANTHER" id="PTHR42865:SF1">
    <property type="entry name" value="AEROBIC C4-DICARBOXYLATE TRANSPORT PROTEIN"/>
    <property type="match status" value="1"/>
</dbReference>
<dbReference type="PANTHER" id="PTHR42865">
    <property type="entry name" value="PROTON/GLUTAMATE-ASPARTATE SYMPORTER"/>
    <property type="match status" value="1"/>
</dbReference>
<dbReference type="Pfam" id="PF00375">
    <property type="entry name" value="SDF"/>
    <property type="match status" value="1"/>
</dbReference>
<dbReference type="PRINTS" id="PR00173">
    <property type="entry name" value="EDTRNSPORT"/>
</dbReference>
<dbReference type="SUPFAM" id="SSF118215">
    <property type="entry name" value="Proton glutamate symport protein"/>
    <property type="match status" value="1"/>
</dbReference>
<dbReference type="PROSITE" id="PS00713">
    <property type="entry name" value="NA_DICARBOXYL_SYMP_1"/>
    <property type="match status" value="1"/>
</dbReference>
<dbReference type="PROSITE" id="PS00714">
    <property type="entry name" value="NA_DICARBOXYL_SYMP_2"/>
    <property type="match status" value="1"/>
</dbReference>
<keyword id="KW-0997">Cell inner membrane</keyword>
<keyword id="KW-1003">Cell membrane</keyword>
<keyword id="KW-0472">Membrane</keyword>
<keyword id="KW-0769">Symport</keyword>
<keyword id="KW-0812">Transmembrane</keyword>
<keyword id="KW-1133">Transmembrane helix</keyword>
<keyword id="KW-0813">Transport</keyword>
<name>DCTA_ECOSM</name>
<organism>
    <name type="scientific">Escherichia coli (strain SMS-3-5 / SECEC)</name>
    <dbReference type="NCBI Taxonomy" id="439855"/>
    <lineage>
        <taxon>Bacteria</taxon>
        <taxon>Pseudomonadati</taxon>
        <taxon>Pseudomonadota</taxon>
        <taxon>Gammaproteobacteria</taxon>
        <taxon>Enterobacterales</taxon>
        <taxon>Enterobacteriaceae</taxon>
        <taxon>Escherichia</taxon>
    </lineage>
</organism>
<proteinExistence type="inferred from homology"/>
<accession>B1LJ76</accession>
<evidence type="ECO:0000255" key="1">
    <source>
        <dbReference type="HAMAP-Rule" id="MF_01300"/>
    </source>
</evidence>
<gene>
    <name evidence="1" type="primary">dctA</name>
    <name type="ordered locus">EcSMS35_3836</name>
</gene>
<comment type="function">
    <text evidence="1">Responsible for the transport of dicarboxylates such as succinate, fumarate, and malate from the periplasm across the membrane.</text>
</comment>
<comment type="subcellular location">
    <subcellularLocation>
        <location evidence="1">Cell inner membrane</location>
        <topology evidence="1">Multi-pass membrane protein</topology>
    </subcellularLocation>
</comment>
<comment type="similarity">
    <text evidence="1">Belongs to the dicarboxylate/amino acid:cation symporter (DAACS) (TC 2.A.23) family.</text>
</comment>
<protein>
    <recommendedName>
        <fullName evidence="1">C4-dicarboxylate transport protein</fullName>
    </recommendedName>
</protein>
<feature type="chain" id="PRO_1000140456" description="C4-dicarboxylate transport protein">
    <location>
        <begin position="1"/>
        <end position="428"/>
    </location>
</feature>
<feature type="transmembrane region" description="Helical" evidence="1">
    <location>
        <begin position="8"/>
        <end position="28"/>
    </location>
</feature>
<feature type="transmembrane region" description="Helical" evidence="1">
    <location>
        <begin position="44"/>
        <end position="64"/>
    </location>
</feature>
<feature type="transmembrane region" description="Helical" evidence="1">
    <location>
        <begin position="76"/>
        <end position="96"/>
    </location>
</feature>
<feature type="transmembrane region" description="Helical" evidence="1">
    <location>
        <begin position="142"/>
        <end position="162"/>
    </location>
</feature>
<feature type="transmembrane region" description="Helical" evidence="1">
    <location>
        <begin position="184"/>
        <end position="204"/>
    </location>
</feature>
<feature type="transmembrane region" description="Helical" evidence="1">
    <location>
        <begin position="222"/>
        <end position="242"/>
    </location>
</feature>
<feature type="transmembrane region" description="Helical" evidence="1">
    <location>
        <begin position="326"/>
        <end position="346"/>
    </location>
</feature>
<feature type="transmembrane region" description="Helical" evidence="1">
    <location>
        <begin position="352"/>
        <end position="372"/>
    </location>
</feature>
<reference key="1">
    <citation type="journal article" date="2008" name="J. Bacteriol.">
        <title>Insights into the environmental resistance gene pool from the genome sequence of the multidrug-resistant environmental isolate Escherichia coli SMS-3-5.</title>
        <authorList>
            <person name="Fricke W.F."/>
            <person name="Wright M.S."/>
            <person name="Lindell A.H."/>
            <person name="Harkins D.M."/>
            <person name="Baker-Austin C."/>
            <person name="Ravel J."/>
            <person name="Stepanauskas R."/>
        </authorList>
    </citation>
    <scope>NUCLEOTIDE SEQUENCE [LARGE SCALE GENOMIC DNA]</scope>
    <source>
        <strain>SMS-3-5 / SECEC</strain>
    </source>
</reference>
<sequence>MKTSLFKSLYFQVLTAIAIGILLGHFYPEIGEQMKPLGDGFVKLIKMIIAPVIFCTVVTGIAGMESMKAVGRTGAVALLYFEIVSTIALIIGLIIVNVVQPGAGMNVDPATLDAKAVAVYADQAKDQGIVAFIMDVIPASVIGAFASGNILQVLLFAVLFGFALHRLGSKGQLIFNVIESFSQVIFGIINMIMRLAPIGAFGAMAFTIGKYGVGTLVQLGQLIICFYITCILFVVLVLGSIAKATGFSIFKFIRYIREELLIVLGTSSSESALPRMLDKMEKLGCRKSVVGLVIPTGYSFNLDGTSIYLTMAAVFIAQATNSQMDIVHQITLLIVLLLSSKGAAGVTGSGFIVLAATLSAVGHLPVAGLALILGIDRFMSEARALTNLVGNGVATIVVAKWVKELDHKKLDDVLNNRAPDGKTHELSS</sequence>